<organism>
    <name type="scientific">Salmonella paratyphi A (strain AKU_12601)</name>
    <dbReference type="NCBI Taxonomy" id="554290"/>
    <lineage>
        <taxon>Bacteria</taxon>
        <taxon>Pseudomonadati</taxon>
        <taxon>Pseudomonadota</taxon>
        <taxon>Gammaproteobacteria</taxon>
        <taxon>Enterobacterales</taxon>
        <taxon>Enterobacteriaceae</taxon>
        <taxon>Salmonella</taxon>
    </lineage>
</organism>
<proteinExistence type="inferred from homology"/>
<reference key="1">
    <citation type="journal article" date="2009" name="BMC Genomics">
        <title>Pseudogene accumulation in the evolutionary histories of Salmonella enterica serovars Paratyphi A and Typhi.</title>
        <authorList>
            <person name="Holt K.E."/>
            <person name="Thomson N.R."/>
            <person name="Wain J."/>
            <person name="Langridge G.C."/>
            <person name="Hasan R."/>
            <person name="Bhutta Z.A."/>
            <person name="Quail M.A."/>
            <person name="Norbertczak H."/>
            <person name="Walker D."/>
            <person name="Simmonds M."/>
            <person name="White B."/>
            <person name="Bason N."/>
            <person name="Mungall K."/>
            <person name="Dougan G."/>
            <person name="Parkhill J."/>
        </authorList>
    </citation>
    <scope>NUCLEOTIDE SEQUENCE [LARGE SCALE GENOMIC DNA]</scope>
    <source>
        <strain>AKU_12601</strain>
    </source>
</reference>
<accession>B5BG08</accession>
<sequence>MNNNNVYSLNNFDFLARSFARMQAEGRPVDIQAVTGNMDEEHRDWFCKRYALYCQQATQAKKLELEH</sequence>
<name>GLGS_SALPK</name>
<protein>
    <recommendedName>
        <fullName evidence="1">Surface composition regulator</fullName>
    </recommendedName>
</protein>
<evidence type="ECO:0000255" key="1">
    <source>
        <dbReference type="HAMAP-Rule" id="MF_00525"/>
    </source>
</evidence>
<feature type="chain" id="PRO_1000127743" description="Surface composition regulator">
    <location>
        <begin position="1"/>
        <end position="67"/>
    </location>
</feature>
<gene>
    <name evidence="1" type="primary">glgS</name>
    <name type="ordered locus">SSPA2861</name>
</gene>
<comment type="function">
    <text evidence="1">Major determinant of cell surface composition. Negatively regulates motility, adhesion and synthesis of biofilm exopolysaccharides.</text>
</comment>
<comment type="similarity">
    <text evidence="1">Belongs to the GlgS family.</text>
</comment>
<dbReference type="EMBL" id="FM200053">
    <property type="protein sequence ID" value="CAR61108.1"/>
    <property type="molecule type" value="Genomic_DNA"/>
</dbReference>
<dbReference type="SMR" id="B5BG08"/>
<dbReference type="KEGG" id="sek:SSPA2861"/>
<dbReference type="HOGENOM" id="CLU_185971_0_0_6"/>
<dbReference type="Proteomes" id="UP000001869">
    <property type="component" value="Chromosome"/>
</dbReference>
<dbReference type="GO" id="GO:1902201">
    <property type="term" value="P:negative regulation of bacterial-type flagellum-dependent cell motility"/>
    <property type="evidence" value="ECO:0007669"/>
    <property type="project" value="UniProtKB-UniRule"/>
</dbReference>
<dbReference type="GO" id="GO:1900191">
    <property type="term" value="P:negative regulation of single-species biofilm formation"/>
    <property type="evidence" value="ECO:0007669"/>
    <property type="project" value="UniProtKB-UniRule"/>
</dbReference>
<dbReference type="Gene3D" id="1.20.970.20">
    <property type="entry name" value="Glycogen synthesis protein GlgS"/>
    <property type="match status" value="1"/>
</dbReference>
<dbReference type="HAMAP" id="MF_00525">
    <property type="entry name" value="GlgS"/>
    <property type="match status" value="1"/>
</dbReference>
<dbReference type="InterPro" id="IPR015065">
    <property type="entry name" value="GlgS"/>
</dbReference>
<dbReference type="InterPro" id="IPR036295">
    <property type="entry name" value="GlgS_sf"/>
</dbReference>
<dbReference type="NCBIfam" id="NF002793">
    <property type="entry name" value="PRK02922.1"/>
    <property type="match status" value="1"/>
</dbReference>
<dbReference type="Pfam" id="PF08971">
    <property type="entry name" value="GlgS"/>
    <property type="match status" value="1"/>
</dbReference>
<dbReference type="SUPFAM" id="SSF109747">
    <property type="entry name" value="Glycogen synthesis protein GlgS"/>
    <property type="match status" value="1"/>
</dbReference>